<reference key="1">
    <citation type="journal article" date="2005" name="J. Bacteriol.">
        <title>Insights on evolution of virulence and resistance from the complete genome analysis of an early methicillin-resistant Staphylococcus aureus strain and a biofilm-producing methicillin-resistant Staphylococcus epidermidis strain.</title>
        <authorList>
            <person name="Gill S.R."/>
            <person name="Fouts D.E."/>
            <person name="Archer G.L."/>
            <person name="Mongodin E.F."/>
            <person name="DeBoy R.T."/>
            <person name="Ravel J."/>
            <person name="Paulsen I.T."/>
            <person name="Kolonay J.F."/>
            <person name="Brinkac L.M."/>
            <person name="Beanan M.J."/>
            <person name="Dodson R.J."/>
            <person name="Daugherty S.C."/>
            <person name="Madupu R."/>
            <person name="Angiuoli S.V."/>
            <person name="Durkin A.S."/>
            <person name="Haft D.H."/>
            <person name="Vamathevan J.J."/>
            <person name="Khouri H."/>
            <person name="Utterback T.R."/>
            <person name="Lee C."/>
            <person name="Dimitrov G."/>
            <person name="Jiang L."/>
            <person name="Qin H."/>
            <person name="Weidman J."/>
            <person name="Tran K."/>
            <person name="Kang K.H."/>
            <person name="Hance I.R."/>
            <person name="Nelson K.E."/>
            <person name="Fraser C.M."/>
        </authorList>
    </citation>
    <scope>NUCLEOTIDE SEQUENCE [LARGE SCALE GENOMIC DNA]</scope>
    <source>
        <strain>COL</strain>
    </source>
</reference>
<gene>
    <name evidence="1" type="primary">thrB</name>
    <name type="ordered locus">SACOL1364</name>
</gene>
<feature type="chain" id="PRO_0000156604" description="Homoserine kinase">
    <location>
        <begin position="1"/>
        <end position="304"/>
    </location>
</feature>
<feature type="binding site" evidence="1">
    <location>
        <begin position="90"/>
        <end position="100"/>
    </location>
    <ligand>
        <name>ATP</name>
        <dbReference type="ChEBI" id="CHEBI:30616"/>
    </ligand>
</feature>
<name>KHSE_STAAC</name>
<dbReference type="EC" id="2.7.1.39" evidence="1"/>
<dbReference type="EMBL" id="CP000046">
    <property type="protein sequence ID" value="AAW36613.1"/>
    <property type="molecule type" value="Genomic_DNA"/>
</dbReference>
<dbReference type="RefSeq" id="WP_000073184.1">
    <property type="nucleotide sequence ID" value="NZ_JBGOFO010000002.1"/>
</dbReference>
<dbReference type="SMR" id="Q5HG90"/>
<dbReference type="KEGG" id="sac:SACOL1364"/>
<dbReference type="HOGENOM" id="CLU_041243_0_0_9"/>
<dbReference type="UniPathway" id="UPA00050">
    <property type="reaction ID" value="UER00064"/>
</dbReference>
<dbReference type="Proteomes" id="UP000000530">
    <property type="component" value="Chromosome"/>
</dbReference>
<dbReference type="GO" id="GO:0005737">
    <property type="term" value="C:cytoplasm"/>
    <property type="evidence" value="ECO:0007669"/>
    <property type="project" value="UniProtKB-SubCell"/>
</dbReference>
<dbReference type="GO" id="GO:0005524">
    <property type="term" value="F:ATP binding"/>
    <property type="evidence" value="ECO:0007669"/>
    <property type="project" value="UniProtKB-UniRule"/>
</dbReference>
<dbReference type="GO" id="GO:0004413">
    <property type="term" value="F:homoserine kinase activity"/>
    <property type="evidence" value="ECO:0007669"/>
    <property type="project" value="UniProtKB-UniRule"/>
</dbReference>
<dbReference type="GO" id="GO:0009088">
    <property type="term" value="P:threonine biosynthetic process"/>
    <property type="evidence" value="ECO:0007669"/>
    <property type="project" value="UniProtKB-UniRule"/>
</dbReference>
<dbReference type="Gene3D" id="3.30.230.10">
    <property type="match status" value="1"/>
</dbReference>
<dbReference type="Gene3D" id="3.30.70.890">
    <property type="entry name" value="GHMP kinase, C-terminal domain"/>
    <property type="match status" value="1"/>
</dbReference>
<dbReference type="HAMAP" id="MF_00384">
    <property type="entry name" value="Homoser_kinase"/>
    <property type="match status" value="1"/>
</dbReference>
<dbReference type="InterPro" id="IPR013750">
    <property type="entry name" value="GHMP_kinase_C_dom"/>
</dbReference>
<dbReference type="InterPro" id="IPR036554">
    <property type="entry name" value="GHMP_kinase_C_sf"/>
</dbReference>
<dbReference type="InterPro" id="IPR006204">
    <property type="entry name" value="GHMP_kinase_N_dom"/>
</dbReference>
<dbReference type="InterPro" id="IPR006203">
    <property type="entry name" value="GHMP_knse_ATP-bd_CS"/>
</dbReference>
<dbReference type="InterPro" id="IPR000870">
    <property type="entry name" value="Homoserine_kinase"/>
</dbReference>
<dbReference type="InterPro" id="IPR020568">
    <property type="entry name" value="Ribosomal_Su5_D2-typ_SF"/>
</dbReference>
<dbReference type="InterPro" id="IPR014721">
    <property type="entry name" value="Ribsml_uS5_D2-typ_fold_subgr"/>
</dbReference>
<dbReference type="NCBIfam" id="TIGR00191">
    <property type="entry name" value="thrB"/>
    <property type="match status" value="1"/>
</dbReference>
<dbReference type="PANTHER" id="PTHR20861:SF1">
    <property type="entry name" value="HOMOSERINE KINASE"/>
    <property type="match status" value="1"/>
</dbReference>
<dbReference type="PANTHER" id="PTHR20861">
    <property type="entry name" value="HOMOSERINE/4-DIPHOSPHOCYTIDYL-2-C-METHYL-D-ERYTHRITOL KINASE"/>
    <property type="match status" value="1"/>
</dbReference>
<dbReference type="Pfam" id="PF08544">
    <property type="entry name" value="GHMP_kinases_C"/>
    <property type="match status" value="1"/>
</dbReference>
<dbReference type="Pfam" id="PF00288">
    <property type="entry name" value="GHMP_kinases_N"/>
    <property type="match status" value="1"/>
</dbReference>
<dbReference type="PIRSF" id="PIRSF000676">
    <property type="entry name" value="Homoser_kin"/>
    <property type="match status" value="1"/>
</dbReference>
<dbReference type="PRINTS" id="PR00958">
    <property type="entry name" value="HOMSERKINASE"/>
</dbReference>
<dbReference type="SUPFAM" id="SSF55060">
    <property type="entry name" value="GHMP Kinase, C-terminal domain"/>
    <property type="match status" value="1"/>
</dbReference>
<dbReference type="SUPFAM" id="SSF54211">
    <property type="entry name" value="Ribosomal protein S5 domain 2-like"/>
    <property type="match status" value="1"/>
</dbReference>
<dbReference type="PROSITE" id="PS00627">
    <property type="entry name" value="GHMP_KINASES_ATP"/>
    <property type="match status" value="1"/>
</dbReference>
<keyword id="KW-0028">Amino-acid biosynthesis</keyword>
<keyword id="KW-0067">ATP-binding</keyword>
<keyword id="KW-0963">Cytoplasm</keyword>
<keyword id="KW-0418">Kinase</keyword>
<keyword id="KW-0547">Nucleotide-binding</keyword>
<keyword id="KW-0791">Threonine biosynthesis</keyword>
<keyword id="KW-0808">Transferase</keyword>
<evidence type="ECO:0000255" key="1">
    <source>
        <dbReference type="HAMAP-Rule" id="MF_00384"/>
    </source>
</evidence>
<sequence length="304" mass="33267">MSNVLELTIPASTANLGVGFDSIGMALDKFLHLSVKETSGTKWEYIFHDDASKQLPTDETNFIYHVAQQVASKYSVDLPNLCIEMRSDIPLARGLGSSASALVGAIYIANYFGDIQLSKHEVLQLATEIEGHPDNVAPTIYGGLIAGYYNDVSKETSVAHIDIPDVDVIVTIPTYELKTEASRRALPQKLTHSEAVKSSAISNTMICALAQHNYELAGKLMQQDGFHEPYRQHLIAEFDEVKTIASQHNAYATVISGAGPTILIFSRKENSGELVRSLNSQVVSCHSELVDINISGVKERIVYQ</sequence>
<organism>
    <name type="scientific">Staphylococcus aureus (strain COL)</name>
    <dbReference type="NCBI Taxonomy" id="93062"/>
    <lineage>
        <taxon>Bacteria</taxon>
        <taxon>Bacillati</taxon>
        <taxon>Bacillota</taxon>
        <taxon>Bacilli</taxon>
        <taxon>Bacillales</taxon>
        <taxon>Staphylococcaceae</taxon>
        <taxon>Staphylococcus</taxon>
    </lineage>
</organism>
<comment type="function">
    <text evidence="1">Catalyzes the ATP-dependent phosphorylation of L-homoserine to L-homoserine phosphate.</text>
</comment>
<comment type="catalytic activity">
    <reaction evidence="1">
        <text>L-homoserine + ATP = O-phospho-L-homoserine + ADP + H(+)</text>
        <dbReference type="Rhea" id="RHEA:13985"/>
        <dbReference type="ChEBI" id="CHEBI:15378"/>
        <dbReference type="ChEBI" id="CHEBI:30616"/>
        <dbReference type="ChEBI" id="CHEBI:57476"/>
        <dbReference type="ChEBI" id="CHEBI:57590"/>
        <dbReference type="ChEBI" id="CHEBI:456216"/>
        <dbReference type="EC" id="2.7.1.39"/>
    </reaction>
</comment>
<comment type="pathway">
    <text evidence="1">Amino-acid biosynthesis; L-threonine biosynthesis; L-threonine from L-aspartate: step 4/5.</text>
</comment>
<comment type="subcellular location">
    <subcellularLocation>
        <location evidence="1">Cytoplasm</location>
    </subcellularLocation>
</comment>
<comment type="similarity">
    <text evidence="1">Belongs to the GHMP kinase family. Homoserine kinase subfamily.</text>
</comment>
<protein>
    <recommendedName>
        <fullName evidence="1">Homoserine kinase</fullName>
        <shortName evidence="1">HK</shortName>
        <shortName evidence="1">HSK</shortName>
        <ecNumber evidence="1">2.7.1.39</ecNumber>
    </recommendedName>
</protein>
<proteinExistence type="inferred from homology"/>
<accession>Q5HG90</accession>